<protein>
    <recommendedName>
        <fullName evidence="1">Hydrogenase maturation factor HybF</fullName>
    </recommendedName>
</protein>
<keyword id="KW-0479">Metal-binding</keyword>
<keyword id="KW-0533">Nickel</keyword>
<keyword id="KW-0862">Zinc</keyword>
<evidence type="ECO:0000255" key="1">
    <source>
        <dbReference type="HAMAP-Rule" id="MF_02099"/>
    </source>
</evidence>
<gene>
    <name evidence="1" type="primary">hybF</name>
    <name type="ordered locus">STY3315</name>
    <name type="ordered locus">t3065</name>
</gene>
<sequence>MHELSLCQSAVEIIQQQAEQHGVARVTGVWLEIGALSCVEERAVRFSFDIACQGTLAQGCELHIDYRPAQAWCWDCSQVVEILRHDAQCPHCHGDRLRVDTGDSLKVKSIEVE</sequence>
<comment type="function">
    <text evidence="1">Involved in the maturation of [NiFe] hydrogenases. Required for nickel insertion into the metal center of the hydrogenase.</text>
</comment>
<comment type="similarity">
    <text evidence="1">Belongs to the HypA/HybF family. HybF subfamily.</text>
</comment>
<reference key="1">
    <citation type="journal article" date="2001" name="Nature">
        <title>Complete genome sequence of a multiple drug resistant Salmonella enterica serovar Typhi CT18.</title>
        <authorList>
            <person name="Parkhill J."/>
            <person name="Dougan G."/>
            <person name="James K.D."/>
            <person name="Thomson N.R."/>
            <person name="Pickard D."/>
            <person name="Wain J."/>
            <person name="Churcher C.M."/>
            <person name="Mungall K.L."/>
            <person name="Bentley S.D."/>
            <person name="Holden M.T.G."/>
            <person name="Sebaihia M."/>
            <person name="Baker S."/>
            <person name="Basham D."/>
            <person name="Brooks K."/>
            <person name="Chillingworth T."/>
            <person name="Connerton P."/>
            <person name="Cronin A."/>
            <person name="Davis P."/>
            <person name="Davies R.M."/>
            <person name="Dowd L."/>
            <person name="White N."/>
            <person name="Farrar J."/>
            <person name="Feltwell T."/>
            <person name="Hamlin N."/>
            <person name="Haque A."/>
            <person name="Hien T.T."/>
            <person name="Holroyd S."/>
            <person name="Jagels K."/>
            <person name="Krogh A."/>
            <person name="Larsen T.S."/>
            <person name="Leather S."/>
            <person name="Moule S."/>
            <person name="O'Gaora P."/>
            <person name="Parry C."/>
            <person name="Quail M.A."/>
            <person name="Rutherford K.M."/>
            <person name="Simmonds M."/>
            <person name="Skelton J."/>
            <person name="Stevens K."/>
            <person name="Whitehead S."/>
            <person name="Barrell B.G."/>
        </authorList>
    </citation>
    <scope>NUCLEOTIDE SEQUENCE [LARGE SCALE GENOMIC DNA]</scope>
    <source>
        <strain>CT18</strain>
    </source>
</reference>
<reference key="2">
    <citation type="journal article" date="2003" name="J. Bacteriol.">
        <title>Comparative genomics of Salmonella enterica serovar Typhi strains Ty2 and CT18.</title>
        <authorList>
            <person name="Deng W."/>
            <person name="Liou S.-R."/>
            <person name="Plunkett G. III"/>
            <person name="Mayhew G.F."/>
            <person name="Rose D.J."/>
            <person name="Burland V."/>
            <person name="Kodoyianni V."/>
            <person name="Schwartz D.C."/>
            <person name="Blattner F.R."/>
        </authorList>
    </citation>
    <scope>NUCLEOTIDE SEQUENCE [LARGE SCALE GENOMIC DNA]</scope>
    <source>
        <strain>ATCC 700931 / Ty2</strain>
    </source>
</reference>
<name>HYBF_SALTI</name>
<proteinExistence type="inferred from homology"/>
<feature type="chain" id="PRO_0000129069" description="Hydrogenase maturation factor HybF">
    <location>
        <begin position="1"/>
        <end position="113"/>
    </location>
</feature>
<feature type="binding site" evidence="1">
    <location>
        <position position="2"/>
    </location>
    <ligand>
        <name>Ni(2+)</name>
        <dbReference type="ChEBI" id="CHEBI:49786"/>
    </ligand>
</feature>
<feature type="binding site" evidence="1">
    <location>
        <position position="3"/>
    </location>
    <ligand>
        <name>Ni(2+)</name>
        <dbReference type="ChEBI" id="CHEBI:49786"/>
    </ligand>
</feature>
<feature type="binding site" evidence="1">
    <location>
        <position position="73"/>
    </location>
    <ligand>
        <name>Zn(2+)</name>
        <dbReference type="ChEBI" id="CHEBI:29105"/>
    </ligand>
</feature>
<feature type="binding site" evidence="1">
    <location>
        <position position="76"/>
    </location>
    <ligand>
        <name>Zn(2+)</name>
        <dbReference type="ChEBI" id="CHEBI:29105"/>
    </ligand>
</feature>
<feature type="binding site" evidence="1">
    <location>
        <position position="89"/>
    </location>
    <ligand>
        <name>Zn(2+)</name>
        <dbReference type="ChEBI" id="CHEBI:29105"/>
    </ligand>
</feature>
<feature type="binding site" evidence="1">
    <location>
        <position position="92"/>
    </location>
    <ligand>
        <name>Zn(2+)</name>
        <dbReference type="ChEBI" id="CHEBI:29105"/>
    </ligand>
</feature>
<dbReference type="EMBL" id="AL513382">
    <property type="protein sequence ID" value="CAD02976.1"/>
    <property type="molecule type" value="Genomic_DNA"/>
</dbReference>
<dbReference type="EMBL" id="AE014613">
    <property type="protein sequence ID" value="AAO70611.1"/>
    <property type="molecule type" value="Genomic_DNA"/>
</dbReference>
<dbReference type="RefSeq" id="NP_457539.1">
    <property type="nucleotide sequence ID" value="NC_003198.1"/>
</dbReference>
<dbReference type="SMR" id="P64422"/>
<dbReference type="STRING" id="220341.gene:17587179"/>
<dbReference type="KEGG" id="stt:t3065"/>
<dbReference type="KEGG" id="sty:STY3315"/>
<dbReference type="PATRIC" id="fig|220341.7.peg.3375"/>
<dbReference type="eggNOG" id="COG0375">
    <property type="taxonomic scope" value="Bacteria"/>
</dbReference>
<dbReference type="HOGENOM" id="CLU_126929_0_0_6"/>
<dbReference type="OMA" id="ILLCPCG"/>
<dbReference type="OrthoDB" id="288014at2"/>
<dbReference type="Proteomes" id="UP000000541">
    <property type="component" value="Chromosome"/>
</dbReference>
<dbReference type="Proteomes" id="UP000002670">
    <property type="component" value="Chromosome"/>
</dbReference>
<dbReference type="GO" id="GO:0016151">
    <property type="term" value="F:nickel cation binding"/>
    <property type="evidence" value="ECO:0007669"/>
    <property type="project" value="UniProtKB-UniRule"/>
</dbReference>
<dbReference type="GO" id="GO:0008270">
    <property type="term" value="F:zinc ion binding"/>
    <property type="evidence" value="ECO:0007669"/>
    <property type="project" value="UniProtKB-UniRule"/>
</dbReference>
<dbReference type="GO" id="GO:0051604">
    <property type="term" value="P:protein maturation"/>
    <property type="evidence" value="ECO:0007669"/>
    <property type="project" value="InterPro"/>
</dbReference>
<dbReference type="GO" id="GO:0036211">
    <property type="term" value="P:protein modification process"/>
    <property type="evidence" value="ECO:0007669"/>
    <property type="project" value="UniProtKB-UniRule"/>
</dbReference>
<dbReference type="FunFam" id="3.30.2320.80:FF:000001">
    <property type="entry name" value="Hydrogenase maturation factor HypA"/>
    <property type="match status" value="1"/>
</dbReference>
<dbReference type="Gene3D" id="3.30.2320.80">
    <property type="match status" value="1"/>
</dbReference>
<dbReference type="HAMAP" id="MF_02099">
    <property type="entry name" value="HybF_subfam"/>
    <property type="match status" value="1"/>
</dbReference>
<dbReference type="HAMAP" id="MF_00213">
    <property type="entry name" value="HypA_HybF"/>
    <property type="match status" value="1"/>
</dbReference>
<dbReference type="InterPro" id="IPR039002">
    <property type="entry name" value="HybF"/>
</dbReference>
<dbReference type="InterPro" id="IPR020538">
    <property type="entry name" value="Hydgase_Ni_incorp_HypA/HybF_CS"/>
</dbReference>
<dbReference type="InterPro" id="IPR000688">
    <property type="entry name" value="HypA/HybF"/>
</dbReference>
<dbReference type="NCBIfam" id="TIGR00100">
    <property type="entry name" value="hypA"/>
    <property type="match status" value="1"/>
</dbReference>
<dbReference type="NCBIfam" id="NF002979">
    <property type="entry name" value="PRK03681.1"/>
    <property type="match status" value="1"/>
</dbReference>
<dbReference type="NCBIfam" id="NF009046">
    <property type="entry name" value="PRK12380.1"/>
    <property type="match status" value="1"/>
</dbReference>
<dbReference type="PANTHER" id="PTHR34535:SF4">
    <property type="entry name" value="HYDROGENASE MATURATION FACTOR HYBF"/>
    <property type="match status" value="1"/>
</dbReference>
<dbReference type="PANTHER" id="PTHR34535">
    <property type="entry name" value="HYDROGENASE MATURATION FACTOR HYPA"/>
    <property type="match status" value="1"/>
</dbReference>
<dbReference type="Pfam" id="PF01155">
    <property type="entry name" value="HypA"/>
    <property type="match status" value="1"/>
</dbReference>
<dbReference type="PIRSF" id="PIRSF004761">
    <property type="entry name" value="Hydrgn_mat_HypA"/>
    <property type="match status" value="1"/>
</dbReference>
<dbReference type="PROSITE" id="PS01249">
    <property type="entry name" value="HYPA"/>
    <property type="match status" value="1"/>
</dbReference>
<accession>P64422</accession>
<accession>Q8XEP6</accession>
<organism>
    <name type="scientific">Salmonella typhi</name>
    <dbReference type="NCBI Taxonomy" id="90370"/>
    <lineage>
        <taxon>Bacteria</taxon>
        <taxon>Pseudomonadati</taxon>
        <taxon>Pseudomonadota</taxon>
        <taxon>Gammaproteobacteria</taxon>
        <taxon>Enterobacterales</taxon>
        <taxon>Enterobacteriaceae</taxon>
        <taxon>Salmonella</taxon>
    </lineage>
</organism>